<dbReference type="EMBL" id="U96080">
    <property type="protein sequence ID" value="AAC63106.1"/>
    <property type="molecule type" value="mRNA"/>
</dbReference>
<dbReference type="SMR" id="O77420"/>
<dbReference type="GO" id="GO:0005576">
    <property type="term" value="C:extracellular region"/>
    <property type="evidence" value="ECO:0007669"/>
    <property type="project" value="UniProtKB-SubCell"/>
</dbReference>
<dbReference type="GO" id="GO:0043176">
    <property type="term" value="F:amine binding"/>
    <property type="evidence" value="ECO:0007669"/>
    <property type="project" value="InterPro"/>
</dbReference>
<dbReference type="GO" id="GO:0030682">
    <property type="term" value="P:symbiont-mediated perturbation of host defenses"/>
    <property type="evidence" value="ECO:0007669"/>
    <property type="project" value="InterPro"/>
</dbReference>
<dbReference type="Gene3D" id="2.40.128.20">
    <property type="match status" value="1"/>
</dbReference>
<dbReference type="InterPro" id="IPR012674">
    <property type="entry name" value="Calycin"/>
</dbReference>
<dbReference type="InterPro" id="IPR002970">
    <property type="entry name" value="Tick_his-bd"/>
</dbReference>
<dbReference type="Pfam" id="PF02098">
    <property type="entry name" value="His_binding"/>
    <property type="match status" value="1"/>
</dbReference>
<dbReference type="PRINTS" id="PR01220">
    <property type="entry name" value="HISBINDING"/>
</dbReference>
<dbReference type="SUPFAM" id="SSF50814">
    <property type="entry name" value="Lipocalins"/>
    <property type="match status" value="1"/>
</dbReference>
<accession>O77420</accession>
<protein>
    <recommendedName>
        <fullName evidence="7">Female-specific histamine-binding protein 1</fullName>
        <shortName evidence="7">FS-HBP1</shortName>
    </recommendedName>
    <alternativeName>
        <fullName evidence="9 10">EV131</fullName>
    </alternativeName>
    <alternativeName>
        <fullName evidence="11">Histacalin</fullName>
    </alternativeName>
    <alternativeName>
        <fullName evidence="7 8">RaHBP1</fullName>
    </alternativeName>
</protein>
<feature type="signal peptide" evidence="2">
    <location>
        <begin position="1"/>
        <end position="18"/>
    </location>
</feature>
<feature type="chain" id="PRO_0000021399" description="Female-specific histamine-binding protein 1">
    <location>
        <begin position="19"/>
        <end position="190"/>
    </location>
</feature>
<feature type="binding site" evidence="1">
    <location>
        <position position="54"/>
    </location>
    <ligand>
        <name>histamine</name>
        <dbReference type="ChEBI" id="CHEBI:58432"/>
        <label>1</label>
        <note>high affinity</note>
    </ligand>
</feature>
<feature type="binding site" evidence="1">
    <location>
        <position position="57"/>
    </location>
    <ligand>
        <name>histamine</name>
        <dbReference type="ChEBI" id="CHEBI:58432"/>
        <label>1</label>
        <note>high affinity</note>
    </ligand>
</feature>
<feature type="binding site" evidence="1">
    <location>
        <position position="60"/>
    </location>
    <ligand>
        <name>histamine</name>
        <dbReference type="ChEBI" id="CHEBI:58432"/>
        <label>1</label>
        <note>high affinity</note>
    </ligand>
</feature>
<feature type="binding site" evidence="1">
    <location>
        <position position="100"/>
    </location>
    <ligand>
        <name>histamine</name>
        <dbReference type="ChEBI" id="CHEBI:58432"/>
        <label>1</label>
        <note>high affinity</note>
    </ligand>
</feature>
<feature type="binding site" evidence="1">
    <location>
        <position position="118"/>
    </location>
    <ligand>
        <name>histamine</name>
        <dbReference type="ChEBI" id="CHEBI:58432"/>
        <label>2</label>
        <note>low affinity</note>
    </ligand>
</feature>
<feature type="binding site" evidence="1">
    <location>
        <position position="153"/>
    </location>
    <ligand>
        <name>histamine</name>
        <dbReference type="ChEBI" id="CHEBI:58432"/>
        <label>1</label>
        <note>high affinity</note>
    </ligand>
</feature>
<feature type="binding site" evidence="1">
    <location>
        <position position="155"/>
    </location>
    <ligand>
        <name>histamine</name>
        <dbReference type="ChEBI" id="CHEBI:58432"/>
        <label>2</label>
        <note>low affinity</note>
    </ligand>
</feature>
<feature type="disulfide bond" evidence="1">
    <location>
        <begin position="66"/>
        <end position="187"/>
    </location>
</feature>
<feature type="disulfide bond" evidence="1">
    <location>
        <begin position="137"/>
        <end position="166"/>
    </location>
</feature>
<reference key="1">
    <citation type="journal article" date="1999" name="Mol. Cell">
        <title>Tick histamine-binding proteins: isolation, cloning, and three-dimensional structure.</title>
        <authorList>
            <person name="Paesen G.C."/>
            <person name="Adams P.L."/>
            <person name="Harlos K."/>
            <person name="Nuttall P.A."/>
            <person name="Stuart D.I."/>
        </authorList>
    </citation>
    <scope>NUCLEOTIDE SEQUENCE [MRNA]</scope>
    <scope>FUNCTION</scope>
    <scope>SUBUNIT</scope>
    <scope>DEVELOPMENTAL STAGE</scope>
    <scope>RECOMBINANT EXPRESSION</scope>
    <source>
        <tissue>Salivary gland</tissue>
    </source>
</reference>
<reference key="2">
    <citation type="journal article" date="2005" name="Ann. N. Y. Acad. Sci.">
        <title>Arthropod-derived protein EV131 inhibits histamine action and allergic asthma.</title>
        <authorList>
            <person name="Weston-Davies W."/>
            <person name="Couillin I."/>
            <person name="Schnyder S."/>
            <person name="Schnyder B."/>
            <person name="Moser R."/>
            <person name="Lissina O."/>
            <person name="Paesen G.C."/>
            <person name="Nuttall P."/>
            <person name="Ryffel B."/>
        </authorList>
    </citation>
    <scope>FUNCTION</scope>
    <scope>BIOASSAY</scope>
    <scope>RECOMBINANT EXPRESSION</scope>
</reference>
<reference key="3">
    <citation type="journal article" date="2005" name="Ann. N. Y. Acad. Sci.">
        <title>Histamine scavenging attenuates endotoxin-induced acute lung injury.</title>
        <authorList>
            <person name="Ryffel B."/>
            <person name="Couillin I."/>
            <person name="Maillet I."/>
            <person name="Schnyder B."/>
            <person name="Paesen G.C."/>
            <person name="Nuttall P."/>
            <person name="Weston-Davies W."/>
        </authorList>
    </citation>
    <scope>FUNCTION</scope>
    <scope>BIOASSAY</scope>
    <scope>RECOMBINANT EXPRESSION</scope>
</reference>
<reference key="4">
    <citation type="journal article" date="2022" name="Front. Pharmacol.">
        <title>Votucalis, a novel centrally sparing histamine-binding protein, attenuates histaminergic itch and neuropathic pain in mice.</title>
        <authorList>
            <person name="Alrashdi I."/>
            <person name="Alsubaiyel A."/>
            <person name="Chan M."/>
            <person name="Battell E.E."/>
            <person name="Ennaceur A."/>
            <person name="Nunn M.A."/>
            <person name="Weston-Davies W."/>
            <person name="Chazot P.L."/>
            <person name="Obara I."/>
        </authorList>
    </citation>
    <scope>FUNCTION</scope>
    <scope>BIOASSAY</scope>
    <scope>PHARMACEUTICAL</scope>
</reference>
<reference key="5">
    <citation type="journal article" date="2000" name="Biochim. Biophys. Acta">
        <title>Tick histamine-binding proteins: lipocalins with a second binding cavity.</title>
        <authorList>
            <person name="Paesen G.C."/>
            <person name="Adams P.L."/>
            <person name="Nuttall P.A."/>
            <person name="Stuart D.L."/>
        </authorList>
    </citation>
    <scope>REVIEW</scope>
</reference>
<evidence type="ECO:0000250" key="1">
    <source>
        <dbReference type="UniProtKB" id="O77421"/>
    </source>
</evidence>
<evidence type="ECO:0000255" key="2"/>
<evidence type="ECO:0000269" key="3">
    <source>
    </source>
</evidence>
<evidence type="ECO:0000269" key="4">
    <source>
    </source>
</evidence>
<evidence type="ECO:0000269" key="5">
    <source>
    </source>
</evidence>
<evidence type="ECO:0000269" key="6">
    <source>
    </source>
</evidence>
<evidence type="ECO:0000303" key="7">
    <source>
    </source>
</evidence>
<evidence type="ECO:0000303" key="8">
    <source>
    </source>
</evidence>
<evidence type="ECO:0000303" key="9">
    <source>
    </source>
</evidence>
<evidence type="ECO:0000303" key="10">
    <source>
    </source>
</evidence>
<evidence type="ECO:0000303" key="11">
    <source>
    </source>
</evidence>
<evidence type="ECO:0000305" key="12"/>
<evidence type="ECO:0000305" key="13">
    <source>
    </source>
</evidence>
<comment type="function">
    <text evidence="1 3 4 5">Salivary tick protein that acts by scavenging histamine at the wound site, outcompeting histamine receptors for histamine, thereby overcoming host inflammatory responses (PubMed:10360182). Binds histamine with a high-affinity (Kd=18 nM) (PubMed:10360182). Contains two binding histamine sites (H and L), that appear to bind histamine with differing affinities (high and low) (By similarity). In vivo, when tested on a mouse asthma model, shows a profound inhibitory effect on allergic asthma. Aerosol administration of this protein prevents airway hyperreactivity and abrogates peribronchial inflammation, eosinophil recruitment, mucus hypersecretion, and interleukins (IL-4 and IL-5) secretion (PubMed:16387687). In addition, when tested on a mouse model of acute respiratory distress syndrome (ARDS), it attenuates endotoxin-induced acute lung injury (PubMed:16387688).</text>
</comment>
<comment type="subunit">
    <text evidence="13">Monomer.</text>
</comment>
<comment type="subcellular location">
    <subcellularLocation>
        <location evidence="13">Secreted</location>
    </subcellularLocation>
</comment>
<comment type="tissue specificity">
    <text evidence="13">Expressed in salivary glands.</text>
</comment>
<comment type="developmental stage">
    <text evidence="3">Early stage of adult feeding.</text>
</comment>
<comment type="pharmaceutical">
    <text evidence="6">Is currently under preclinical trials by Akari therapeutics under the name Votucalis to act as an anti-histaminic to treat pruritus/itch and nociception.</text>
</comment>
<comment type="similarity">
    <text evidence="12">Belongs to the calycin superfamily. Histamine-binding salivary protein family.</text>
</comment>
<proteinExistence type="evidence at protein level"/>
<organism>
    <name type="scientific">Rhipicephalus appendiculatus</name>
    <name type="common">Brown ear tick</name>
    <dbReference type="NCBI Taxonomy" id="34631"/>
    <lineage>
        <taxon>Eukaryota</taxon>
        <taxon>Metazoa</taxon>
        <taxon>Ecdysozoa</taxon>
        <taxon>Arthropoda</taxon>
        <taxon>Chelicerata</taxon>
        <taxon>Arachnida</taxon>
        <taxon>Acari</taxon>
        <taxon>Parasitiformes</taxon>
        <taxon>Ixodida</taxon>
        <taxon>Ixodoidea</taxon>
        <taxon>Ixodidae</taxon>
        <taxon>Rhipicephalinae</taxon>
        <taxon>Rhipicephalus</taxon>
        <taxon>Rhipicephalus</taxon>
    </lineage>
</organism>
<keyword id="KW-1015">Disulfide bond</keyword>
<keyword id="KW-0582">Pharmaceutical</keyword>
<keyword id="KW-0964">Secreted</keyword>
<keyword id="KW-0732">Signal</keyword>
<sequence length="190" mass="21370">MKLLLSLAFVLALSQVKADKPVWADEAANGEHQDAWKHLQKLVEENYDLIKATYKNDPVWGNDFTCVGTAAQNLNEDEKNVEAWFMFMNNADTVYQHTFEKATPDKMYGYNKENAITYQTEDGQVLTDVLAFSDDNCYVIYALGPDGSGAGYELWATDYTDVPASCLEKFNEYAAGLPVRDVYTSDCLPE</sequence>
<name>HBP1_RHIAP</name>